<gene>
    <name evidence="1" type="primary">rnhA</name>
    <name type="ordered locus">CC_3365</name>
</gene>
<accession>Q9A341</accession>
<keyword id="KW-0963">Cytoplasm</keyword>
<keyword id="KW-0255">Endonuclease</keyword>
<keyword id="KW-0378">Hydrolase</keyword>
<keyword id="KW-0460">Magnesium</keyword>
<keyword id="KW-0479">Metal-binding</keyword>
<keyword id="KW-0540">Nuclease</keyword>
<keyword id="KW-1185">Reference proteome</keyword>
<name>RNH_CAUVC</name>
<comment type="function">
    <text evidence="1">Endonuclease that specifically degrades the RNA of RNA-DNA hybrids.</text>
</comment>
<comment type="catalytic activity">
    <reaction evidence="1">
        <text>Endonucleolytic cleavage to 5'-phosphomonoester.</text>
        <dbReference type="EC" id="3.1.26.4"/>
    </reaction>
</comment>
<comment type="cofactor">
    <cofactor evidence="1">
        <name>Mg(2+)</name>
        <dbReference type="ChEBI" id="CHEBI:18420"/>
    </cofactor>
    <text evidence="1">Binds 1 Mg(2+) ion per subunit. May bind a second metal ion at a regulatory site, or after substrate binding.</text>
</comment>
<comment type="subunit">
    <text evidence="1">Monomer.</text>
</comment>
<comment type="subcellular location">
    <subcellularLocation>
        <location evidence="1">Cytoplasm</location>
    </subcellularLocation>
</comment>
<comment type="similarity">
    <text evidence="1">Belongs to the RNase H family.</text>
</comment>
<evidence type="ECO:0000255" key="1">
    <source>
        <dbReference type="HAMAP-Rule" id="MF_00042"/>
    </source>
</evidence>
<evidence type="ECO:0000255" key="2">
    <source>
        <dbReference type="PROSITE-ProRule" id="PRU00408"/>
    </source>
</evidence>
<proteinExistence type="inferred from homology"/>
<protein>
    <recommendedName>
        <fullName evidence="1">Ribonuclease HI</fullName>
        <shortName evidence="1">RNase HI</shortName>
        <ecNumber evidence="1">3.1.26.4</ecNumber>
    </recommendedName>
</protein>
<dbReference type="EC" id="3.1.26.4" evidence="1"/>
<dbReference type="EMBL" id="AE005673">
    <property type="protein sequence ID" value="AAK25327.1"/>
    <property type="molecule type" value="Genomic_DNA"/>
</dbReference>
<dbReference type="PIR" id="C87666">
    <property type="entry name" value="C87666"/>
</dbReference>
<dbReference type="RefSeq" id="NP_422159.1">
    <property type="nucleotide sequence ID" value="NC_002696.2"/>
</dbReference>
<dbReference type="RefSeq" id="WP_010921194.1">
    <property type="nucleotide sequence ID" value="NC_002696.2"/>
</dbReference>
<dbReference type="SMR" id="Q9A341"/>
<dbReference type="STRING" id="190650.CC_3365"/>
<dbReference type="EnsemblBacteria" id="AAK25327">
    <property type="protein sequence ID" value="AAK25327"/>
    <property type="gene ID" value="CC_3365"/>
</dbReference>
<dbReference type="KEGG" id="ccr:CC_3365"/>
<dbReference type="PATRIC" id="fig|190650.5.peg.3372"/>
<dbReference type="eggNOG" id="COG0328">
    <property type="taxonomic scope" value="Bacteria"/>
</dbReference>
<dbReference type="HOGENOM" id="CLU_030894_6_0_5"/>
<dbReference type="BioCyc" id="CAULO:CC3365-MONOMER"/>
<dbReference type="CD-CODE" id="EF55C906">
    <property type="entry name" value="BR-bodies"/>
</dbReference>
<dbReference type="Proteomes" id="UP000001816">
    <property type="component" value="Chromosome"/>
</dbReference>
<dbReference type="GO" id="GO:0005737">
    <property type="term" value="C:cytoplasm"/>
    <property type="evidence" value="ECO:0007669"/>
    <property type="project" value="UniProtKB-SubCell"/>
</dbReference>
<dbReference type="GO" id="GO:0000287">
    <property type="term" value="F:magnesium ion binding"/>
    <property type="evidence" value="ECO:0007669"/>
    <property type="project" value="UniProtKB-UniRule"/>
</dbReference>
<dbReference type="GO" id="GO:0003676">
    <property type="term" value="F:nucleic acid binding"/>
    <property type="evidence" value="ECO:0007669"/>
    <property type="project" value="InterPro"/>
</dbReference>
<dbReference type="GO" id="GO:0004523">
    <property type="term" value="F:RNA-DNA hybrid ribonuclease activity"/>
    <property type="evidence" value="ECO:0007669"/>
    <property type="project" value="UniProtKB-UniRule"/>
</dbReference>
<dbReference type="GO" id="GO:0043137">
    <property type="term" value="P:DNA replication, removal of RNA primer"/>
    <property type="evidence" value="ECO:0007669"/>
    <property type="project" value="TreeGrafter"/>
</dbReference>
<dbReference type="CDD" id="cd09278">
    <property type="entry name" value="RNase_HI_prokaryote_like"/>
    <property type="match status" value="1"/>
</dbReference>
<dbReference type="FunFam" id="3.30.420.10:FF:000089">
    <property type="entry name" value="Ribonuclease H"/>
    <property type="match status" value="1"/>
</dbReference>
<dbReference type="Gene3D" id="3.30.420.10">
    <property type="entry name" value="Ribonuclease H-like superfamily/Ribonuclease H"/>
    <property type="match status" value="1"/>
</dbReference>
<dbReference type="HAMAP" id="MF_00042">
    <property type="entry name" value="RNase_H"/>
    <property type="match status" value="1"/>
</dbReference>
<dbReference type="InterPro" id="IPR050092">
    <property type="entry name" value="RNase_H"/>
</dbReference>
<dbReference type="InterPro" id="IPR012337">
    <property type="entry name" value="RNaseH-like_sf"/>
</dbReference>
<dbReference type="InterPro" id="IPR002156">
    <property type="entry name" value="RNaseH_domain"/>
</dbReference>
<dbReference type="InterPro" id="IPR036397">
    <property type="entry name" value="RNaseH_sf"/>
</dbReference>
<dbReference type="InterPro" id="IPR022892">
    <property type="entry name" value="RNaseHI"/>
</dbReference>
<dbReference type="NCBIfam" id="NF001236">
    <property type="entry name" value="PRK00203.1"/>
    <property type="match status" value="1"/>
</dbReference>
<dbReference type="PANTHER" id="PTHR10642">
    <property type="entry name" value="RIBONUCLEASE H1"/>
    <property type="match status" value="1"/>
</dbReference>
<dbReference type="PANTHER" id="PTHR10642:SF26">
    <property type="entry name" value="RIBONUCLEASE H1"/>
    <property type="match status" value="1"/>
</dbReference>
<dbReference type="Pfam" id="PF00075">
    <property type="entry name" value="RNase_H"/>
    <property type="match status" value="1"/>
</dbReference>
<dbReference type="SUPFAM" id="SSF53098">
    <property type="entry name" value="Ribonuclease H-like"/>
    <property type="match status" value="1"/>
</dbReference>
<dbReference type="PROSITE" id="PS50879">
    <property type="entry name" value="RNASE_H_1"/>
    <property type="match status" value="1"/>
</dbReference>
<feature type="chain" id="PRO_0000195371" description="Ribonuclease HI">
    <location>
        <begin position="1"/>
        <end position="149"/>
    </location>
</feature>
<feature type="domain" description="RNase H type-1" evidence="2">
    <location>
        <begin position="1"/>
        <end position="142"/>
    </location>
</feature>
<feature type="binding site" evidence="1">
    <location>
        <position position="10"/>
    </location>
    <ligand>
        <name>Mg(2+)</name>
        <dbReference type="ChEBI" id="CHEBI:18420"/>
        <label>1</label>
    </ligand>
</feature>
<feature type="binding site" evidence="1">
    <location>
        <position position="10"/>
    </location>
    <ligand>
        <name>Mg(2+)</name>
        <dbReference type="ChEBI" id="CHEBI:18420"/>
        <label>2</label>
    </ligand>
</feature>
<feature type="binding site" evidence="1">
    <location>
        <position position="48"/>
    </location>
    <ligand>
        <name>Mg(2+)</name>
        <dbReference type="ChEBI" id="CHEBI:18420"/>
        <label>1</label>
    </ligand>
</feature>
<feature type="binding site" evidence="1">
    <location>
        <position position="70"/>
    </location>
    <ligand>
        <name>Mg(2+)</name>
        <dbReference type="ChEBI" id="CHEBI:18420"/>
        <label>1</label>
    </ligand>
</feature>
<feature type="binding site" evidence="1">
    <location>
        <position position="134"/>
    </location>
    <ligand>
        <name>Mg(2+)</name>
        <dbReference type="ChEBI" id="CHEBI:18420"/>
        <label>2</label>
    </ligand>
</feature>
<sequence>MTPKVTIYTDGACKGNPGPGGWGAILFYGDKKKEICGGEPGTTNNRMELMAAIQALELLNRPCVVELHTDSQYVMKGIQEWIRGWKARGWKTADKSPVKNDDLWKRLDAARARHDVDWRWVKGHAGHPLNERADALANEGLRQANPRVI</sequence>
<organism>
    <name type="scientific">Caulobacter vibrioides (strain ATCC 19089 / CIP 103742 / CB 15)</name>
    <name type="common">Caulobacter crescentus</name>
    <dbReference type="NCBI Taxonomy" id="190650"/>
    <lineage>
        <taxon>Bacteria</taxon>
        <taxon>Pseudomonadati</taxon>
        <taxon>Pseudomonadota</taxon>
        <taxon>Alphaproteobacteria</taxon>
        <taxon>Caulobacterales</taxon>
        <taxon>Caulobacteraceae</taxon>
        <taxon>Caulobacter</taxon>
    </lineage>
</organism>
<reference key="1">
    <citation type="journal article" date="2001" name="Proc. Natl. Acad. Sci. U.S.A.">
        <title>Complete genome sequence of Caulobacter crescentus.</title>
        <authorList>
            <person name="Nierman W.C."/>
            <person name="Feldblyum T.V."/>
            <person name="Laub M.T."/>
            <person name="Paulsen I.T."/>
            <person name="Nelson K.E."/>
            <person name="Eisen J.A."/>
            <person name="Heidelberg J.F."/>
            <person name="Alley M.R.K."/>
            <person name="Ohta N."/>
            <person name="Maddock J.R."/>
            <person name="Potocka I."/>
            <person name="Nelson W.C."/>
            <person name="Newton A."/>
            <person name="Stephens C."/>
            <person name="Phadke N.D."/>
            <person name="Ely B."/>
            <person name="DeBoy R.T."/>
            <person name="Dodson R.J."/>
            <person name="Durkin A.S."/>
            <person name="Gwinn M.L."/>
            <person name="Haft D.H."/>
            <person name="Kolonay J.F."/>
            <person name="Smit J."/>
            <person name="Craven M.B."/>
            <person name="Khouri H.M."/>
            <person name="Shetty J."/>
            <person name="Berry K.J."/>
            <person name="Utterback T.R."/>
            <person name="Tran K."/>
            <person name="Wolf A.M."/>
            <person name="Vamathevan J.J."/>
            <person name="Ermolaeva M.D."/>
            <person name="White O."/>
            <person name="Salzberg S.L."/>
            <person name="Venter J.C."/>
            <person name="Shapiro L."/>
            <person name="Fraser C.M."/>
        </authorList>
    </citation>
    <scope>NUCLEOTIDE SEQUENCE [LARGE SCALE GENOMIC DNA]</scope>
    <source>
        <strain>ATCC 19089 / CIP 103742 / CB 15</strain>
    </source>
</reference>